<sequence length="137" mass="15664">MNTLGLYQSDWSKAPPHAHAYHVKTTREQGHYHLIEGFTQPANGSNTDQHTHYYTGITSFENGHFHRYYGISGPAIPLADGTHYHEIEETTYLAYNEPIEIQYGGVVYDPGDDRRKTHRHTLKGKTREIVGNEPLGW</sequence>
<feature type="chain" id="PRO_0000049631" description="Uncharacterized protein YmaF">
    <location>
        <begin position="1"/>
        <end position="137"/>
    </location>
</feature>
<reference key="1">
    <citation type="journal article" date="1997" name="Nature">
        <title>The complete genome sequence of the Gram-positive bacterium Bacillus subtilis.</title>
        <authorList>
            <person name="Kunst F."/>
            <person name="Ogasawara N."/>
            <person name="Moszer I."/>
            <person name="Albertini A.M."/>
            <person name="Alloni G."/>
            <person name="Azevedo V."/>
            <person name="Bertero M.G."/>
            <person name="Bessieres P."/>
            <person name="Bolotin A."/>
            <person name="Borchert S."/>
            <person name="Borriss R."/>
            <person name="Boursier L."/>
            <person name="Brans A."/>
            <person name="Braun M."/>
            <person name="Brignell S.C."/>
            <person name="Bron S."/>
            <person name="Brouillet S."/>
            <person name="Bruschi C.V."/>
            <person name="Caldwell B."/>
            <person name="Capuano V."/>
            <person name="Carter N.M."/>
            <person name="Choi S.-K."/>
            <person name="Codani J.-J."/>
            <person name="Connerton I.F."/>
            <person name="Cummings N.J."/>
            <person name="Daniel R.A."/>
            <person name="Denizot F."/>
            <person name="Devine K.M."/>
            <person name="Duesterhoeft A."/>
            <person name="Ehrlich S.D."/>
            <person name="Emmerson P.T."/>
            <person name="Entian K.-D."/>
            <person name="Errington J."/>
            <person name="Fabret C."/>
            <person name="Ferrari E."/>
            <person name="Foulger D."/>
            <person name="Fritz C."/>
            <person name="Fujita M."/>
            <person name="Fujita Y."/>
            <person name="Fuma S."/>
            <person name="Galizzi A."/>
            <person name="Galleron N."/>
            <person name="Ghim S.-Y."/>
            <person name="Glaser P."/>
            <person name="Goffeau A."/>
            <person name="Golightly E.J."/>
            <person name="Grandi G."/>
            <person name="Guiseppi G."/>
            <person name="Guy B.J."/>
            <person name="Haga K."/>
            <person name="Haiech J."/>
            <person name="Harwood C.R."/>
            <person name="Henaut A."/>
            <person name="Hilbert H."/>
            <person name="Holsappel S."/>
            <person name="Hosono S."/>
            <person name="Hullo M.-F."/>
            <person name="Itaya M."/>
            <person name="Jones L.-M."/>
            <person name="Joris B."/>
            <person name="Karamata D."/>
            <person name="Kasahara Y."/>
            <person name="Klaerr-Blanchard M."/>
            <person name="Klein C."/>
            <person name="Kobayashi Y."/>
            <person name="Koetter P."/>
            <person name="Koningstein G."/>
            <person name="Krogh S."/>
            <person name="Kumano M."/>
            <person name="Kurita K."/>
            <person name="Lapidus A."/>
            <person name="Lardinois S."/>
            <person name="Lauber J."/>
            <person name="Lazarevic V."/>
            <person name="Lee S.-M."/>
            <person name="Levine A."/>
            <person name="Liu H."/>
            <person name="Masuda S."/>
            <person name="Mauel C."/>
            <person name="Medigue C."/>
            <person name="Medina N."/>
            <person name="Mellado R.P."/>
            <person name="Mizuno M."/>
            <person name="Moestl D."/>
            <person name="Nakai S."/>
            <person name="Noback M."/>
            <person name="Noone D."/>
            <person name="O'Reilly M."/>
            <person name="Ogawa K."/>
            <person name="Ogiwara A."/>
            <person name="Oudega B."/>
            <person name="Park S.-H."/>
            <person name="Parro V."/>
            <person name="Pohl T.M."/>
            <person name="Portetelle D."/>
            <person name="Porwollik S."/>
            <person name="Prescott A.M."/>
            <person name="Presecan E."/>
            <person name="Pujic P."/>
            <person name="Purnelle B."/>
            <person name="Rapoport G."/>
            <person name="Rey M."/>
            <person name="Reynolds S."/>
            <person name="Rieger M."/>
            <person name="Rivolta C."/>
            <person name="Rocha E."/>
            <person name="Roche B."/>
            <person name="Rose M."/>
            <person name="Sadaie Y."/>
            <person name="Sato T."/>
            <person name="Scanlan E."/>
            <person name="Schleich S."/>
            <person name="Schroeter R."/>
            <person name="Scoffone F."/>
            <person name="Sekiguchi J."/>
            <person name="Sekowska A."/>
            <person name="Seror S.J."/>
            <person name="Serror P."/>
            <person name="Shin B.-S."/>
            <person name="Soldo B."/>
            <person name="Sorokin A."/>
            <person name="Tacconi E."/>
            <person name="Takagi T."/>
            <person name="Takahashi H."/>
            <person name="Takemaru K."/>
            <person name="Takeuchi M."/>
            <person name="Tamakoshi A."/>
            <person name="Tanaka T."/>
            <person name="Terpstra P."/>
            <person name="Tognoni A."/>
            <person name="Tosato V."/>
            <person name="Uchiyama S."/>
            <person name="Vandenbol M."/>
            <person name="Vannier F."/>
            <person name="Vassarotti A."/>
            <person name="Viari A."/>
            <person name="Wambutt R."/>
            <person name="Wedler E."/>
            <person name="Wedler H."/>
            <person name="Weitzenegger T."/>
            <person name="Winters P."/>
            <person name="Wipat A."/>
            <person name="Yamamoto H."/>
            <person name="Yamane K."/>
            <person name="Yasumoto K."/>
            <person name="Yata K."/>
            <person name="Yoshida K."/>
            <person name="Yoshikawa H.-F."/>
            <person name="Zumstein E."/>
            <person name="Yoshikawa H."/>
            <person name="Danchin A."/>
        </authorList>
    </citation>
    <scope>NUCLEOTIDE SEQUENCE [LARGE SCALE GENOMIC DNA]</scope>
    <source>
        <strain>168</strain>
    </source>
</reference>
<reference key="2">
    <citation type="journal article" date="2009" name="Microbiology">
        <title>From a consortium sequence to a unified sequence: the Bacillus subtilis 168 reference genome a decade later.</title>
        <authorList>
            <person name="Barbe V."/>
            <person name="Cruveiller S."/>
            <person name="Kunst F."/>
            <person name="Lenoble P."/>
            <person name="Meurice G."/>
            <person name="Sekowska A."/>
            <person name="Vallenet D."/>
            <person name="Wang T."/>
            <person name="Moszer I."/>
            <person name="Medigue C."/>
            <person name="Danchin A."/>
        </authorList>
    </citation>
    <scope>SEQUENCE REVISION TO 137</scope>
</reference>
<gene>
    <name type="primary">ymaF</name>
    <name type="ordered locus">BSU17320</name>
</gene>
<organism>
    <name type="scientific">Bacillus subtilis (strain 168)</name>
    <dbReference type="NCBI Taxonomy" id="224308"/>
    <lineage>
        <taxon>Bacteria</taxon>
        <taxon>Bacillati</taxon>
        <taxon>Bacillota</taxon>
        <taxon>Bacilli</taxon>
        <taxon>Bacillales</taxon>
        <taxon>Bacillaceae</taxon>
        <taxon>Bacillus</taxon>
    </lineage>
</organism>
<keyword id="KW-1185">Reference proteome</keyword>
<dbReference type="EMBL" id="AL009126">
    <property type="protein sequence ID" value="CAB13616.2"/>
    <property type="molecule type" value="Genomic_DNA"/>
</dbReference>
<dbReference type="PIR" id="H69883">
    <property type="entry name" value="H69883"/>
</dbReference>
<dbReference type="RefSeq" id="NP_389614.2">
    <property type="nucleotide sequence ID" value="NC_000964.3"/>
</dbReference>
<dbReference type="RefSeq" id="WP_003231769.1">
    <property type="nucleotide sequence ID" value="NZ_OZ025638.1"/>
</dbReference>
<dbReference type="FunCoup" id="O31794">
    <property type="interactions" value="7"/>
</dbReference>
<dbReference type="IntAct" id="O31794">
    <property type="interactions" value="3"/>
</dbReference>
<dbReference type="STRING" id="224308.BSU17320"/>
<dbReference type="PaxDb" id="224308-BSU17320"/>
<dbReference type="EnsemblBacteria" id="CAB13616">
    <property type="protein sequence ID" value="CAB13616"/>
    <property type="gene ID" value="BSU_17320"/>
</dbReference>
<dbReference type="GeneID" id="940060"/>
<dbReference type="KEGG" id="bsu:BSU17320"/>
<dbReference type="PATRIC" id="fig|224308.43.peg.1829"/>
<dbReference type="eggNOG" id="ENOG50344GQ">
    <property type="taxonomic scope" value="Bacteria"/>
</dbReference>
<dbReference type="InParanoid" id="O31794"/>
<dbReference type="OrthoDB" id="2967209at2"/>
<dbReference type="BioCyc" id="BSUB:BSU17320-MONOMER"/>
<dbReference type="Proteomes" id="UP000001570">
    <property type="component" value="Chromosome"/>
</dbReference>
<dbReference type="InterPro" id="IPR024307">
    <property type="entry name" value="YmaF"/>
</dbReference>
<dbReference type="Pfam" id="PF12788">
    <property type="entry name" value="YmaF"/>
    <property type="match status" value="1"/>
</dbReference>
<protein>
    <recommendedName>
        <fullName>Uncharacterized protein YmaF</fullName>
    </recommendedName>
</protein>
<accession>O31794</accession>
<proteinExistence type="predicted"/>
<name>YMAF_BACSU</name>